<comment type="function">
    <text evidence="1">Specifically methylates the N3 position of the uracil ring of uridine 1498 (m3U1498) in 16S rRNA. Acts on the fully assembled 30S ribosomal subunit (By similarity).</text>
</comment>
<comment type="catalytic activity">
    <reaction>
        <text>uridine(1498) in 16S rRNA + S-adenosyl-L-methionine = N(3)-methyluridine(1498) in 16S rRNA + S-adenosyl-L-homocysteine + H(+)</text>
        <dbReference type="Rhea" id="RHEA:42920"/>
        <dbReference type="Rhea" id="RHEA-COMP:10283"/>
        <dbReference type="Rhea" id="RHEA-COMP:10284"/>
        <dbReference type="ChEBI" id="CHEBI:15378"/>
        <dbReference type="ChEBI" id="CHEBI:57856"/>
        <dbReference type="ChEBI" id="CHEBI:59789"/>
        <dbReference type="ChEBI" id="CHEBI:65315"/>
        <dbReference type="ChEBI" id="CHEBI:74502"/>
        <dbReference type="EC" id="2.1.1.193"/>
    </reaction>
</comment>
<comment type="subcellular location">
    <subcellularLocation>
        <location evidence="1">Cytoplasm</location>
    </subcellularLocation>
</comment>
<comment type="similarity">
    <text evidence="2">Belongs to the RNA methyltransferase RsmE family.</text>
</comment>
<proteinExistence type="inferred from homology"/>
<evidence type="ECO:0000250" key="1"/>
<evidence type="ECO:0000305" key="2"/>
<reference key="1">
    <citation type="journal article" date="1998" name="Science">
        <title>Complete genome sequence of Treponema pallidum, the syphilis spirochete.</title>
        <authorList>
            <person name="Fraser C.M."/>
            <person name="Norris S.J."/>
            <person name="Weinstock G.M."/>
            <person name="White O."/>
            <person name="Sutton G.G."/>
            <person name="Dodson R.J."/>
            <person name="Gwinn M.L."/>
            <person name="Hickey E.K."/>
            <person name="Clayton R.A."/>
            <person name="Ketchum K.A."/>
            <person name="Sodergren E."/>
            <person name="Hardham J.M."/>
            <person name="McLeod M.P."/>
            <person name="Salzberg S.L."/>
            <person name="Peterson J.D."/>
            <person name="Khalak H.G."/>
            <person name="Richardson D.L."/>
            <person name="Howell J.K."/>
            <person name="Chidambaram M."/>
            <person name="Utterback T.R."/>
            <person name="McDonald L.A."/>
            <person name="Artiach P."/>
            <person name="Bowman C."/>
            <person name="Cotton M.D."/>
            <person name="Fujii C."/>
            <person name="Garland S.A."/>
            <person name="Hatch B."/>
            <person name="Horst K."/>
            <person name="Roberts K.M."/>
            <person name="Sandusky M."/>
            <person name="Weidman J.F."/>
            <person name="Smith H.O."/>
            <person name="Venter J.C."/>
        </authorList>
    </citation>
    <scope>NUCLEOTIDE SEQUENCE [LARGE SCALE GENOMIC DNA]</scope>
    <source>
        <strain>Nichols</strain>
    </source>
</reference>
<organism>
    <name type="scientific">Treponema pallidum (strain Nichols)</name>
    <dbReference type="NCBI Taxonomy" id="243276"/>
    <lineage>
        <taxon>Bacteria</taxon>
        <taxon>Pseudomonadati</taxon>
        <taxon>Spirochaetota</taxon>
        <taxon>Spirochaetia</taxon>
        <taxon>Spirochaetales</taxon>
        <taxon>Treponemataceae</taxon>
        <taxon>Treponema</taxon>
    </lineage>
</organism>
<dbReference type="EC" id="2.1.1.193"/>
<dbReference type="EMBL" id="AE000520">
    <property type="protein sequence ID" value="AAC65027.1"/>
    <property type="molecule type" value="Genomic_DNA"/>
</dbReference>
<dbReference type="PIR" id="B71375">
    <property type="entry name" value="B71375"/>
</dbReference>
<dbReference type="RefSeq" id="WP_010881481.1">
    <property type="nucleotide sequence ID" value="NC_021490.2"/>
</dbReference>
<dbReference type="SMR" id="O83075"/>
<dbReference type="IntAct" id="O83075">
    <property type="interactions" value="1"/>
</dbReference>
<dbReference type="STRING" id="243276.TP_0032"/>
<dbReference type="EnsemblBacteria" id="AAC65027">
    <property type="protein sequence ID" value="AAC65027"/>
    <property type="gene ID" value="TP_0032"/>
</dbReference>
<dbReference type="KEGG" id="tpa:TP_0032"/>
<dbReference type="KEGG" id="tpw:TPANIC_0032"/>
<dbReference type="eggNOG" id="COG1385">
    <property type="taxonomic scope" value="Bacteria"/>
</dbReference>
<dbReference type="HOGENOM" id="CLU_067442_1_0_12"/>
<dbReference type="OrthoDB" id="362914at2"/>
<dbReference type="Proteomes" id="UP000000811">
    <property type="component" value="Chromosome"/>
</dbReference>
<dbReference type="GO" id="GO:0005737">
    <property type="term" value="C:cytoplasm"/>
    <property type="evidence" value="ECO:0007669"/>
    <property type="project" value="UniProtKB-SubCell"/>
</dbReference>
<dbReference type="GO" id="GO:0070042">
    <property type="term" value="F:rRNA (uridine-N3-)-methyltransferase activity"/>
    <property type="evidence" value="ECO:0007669"/>
    <property type="project" value="TreeGrafter"/>
</dbReference>
<dbReference type="GO" id="GO:0070475">
    <property type="term" value="P:rRNA base methylation"/>
    <property type="evidence" value="ECO:0007669"/>
    <property type="project" value="TreeGrafter"/>
</dbReference>
<dbReference type="CDD" id="cd18084">
    <property type="entry name" value="RsmE-like"/>
    <property type="match status" value="1"/>
</dbReference>
<dbReference type="Gene3D" id="3.40.1280.10">
    <property type="match status" value="1"/>
</dbReference>
<dbReference type="InterPro" id="IPR029028">
    <property type="entry name" value="Alpha/beta_knot_MTases"/>
</dbReference>
<dbReference type="InterPro" id="IPR006700">
    <property type="entry name" value="RsmE"/>
</dbReference>
<dbReference type="InterPro" id="IPR046886">
    <property type="entry name" value="RsmE_MTase_dom"/>
</dbReference>
<dbReference type="InterPro" id="IPR046887">
    <property type="entry name" value="RsmE_PUA-like"/>
</dbReference>
<dbReference type="InterPro" id="IPR029026">
    <property type="entry name" value="tRNA_m1G_MTases_N"/>
</dbReference>
<dbReference type="NCBIfam" id="NF008699">
    <property type="entry name" value="PRK11713.5-2"/>
    <property type="match status" value="1"/>
</dbReference>
<dbReference type="NCBIfam" id="TIGR00046">
    <property type="entry name" value="RsmE family RNA methyltransferase"/>
    <property type="match status" value="1"/>
</dbReference>
<dbReference type="PANTHER" id="PTHR30027:SF3">
    <property type="entry name" value="16S RRNA (URACIL(1498)-N(3))-METHYLTRANSFERASE"/>
    <property type="match status" value="1"/>
</dbReference>
<dbReference type="PANTHER" id="PTHR30027">
    <property type="entry name" value="RIBOSOMAL RNA SMALL SUBUNIT METHYLTRANSFERASE E"/>
    <property type="match status" value="1"/>
</dbReference>
<dbReference type="Pfam" id="PF04452">
    <property type="entry name" value="Methyltrans_RNA"/>
    <property type="match status" value="1"/>
</dbReference>
<dbReference type="Pfam" id="PF20260">
    <property type="entry name" value="PUA_4"/>
    <property type="match status" value="1"/>
</dbReference>
<dbReference type="PIRSF" id="PIRSF015601">
    <property type="entry name" value="MTase_slr0722"/>
    <property type="match status" value="1"/>
</dbReference>
<dbReference type="SUPFAM" id="SSF75217">
    <property type="entry name" value="alpha/beta knot"/>
    <property type="match status" value="1"/>
</dbReference>
<keyword id="KW-0963">Cytoplasm</keyword>
<keyword id="KW-0489">Methyltransferase</keyword>
<keyword id="KW-1185">Reference proteome</keyword>
<keyword id="KW-0698">rRNA processing</keyword>
<keyword id="KW-0949">S-adenosyl-L-methionine</keyword>
<keyword id="KW-0808">Transferase</keyword>
<protein>
    <recommendedName>
        <fullName>Ribosomal RNA small subunit methyltransferase E</fullName>
        <ecNumber>2.1.1.193</ecNumber>
    </recommendedName>
    <alternativeName>
        <fullName>16S rRNA m3U1498 methyltransferase</fullName>
    </alternativeName>
</protein>
<accession>O83075</accession>
<feature type="chain" id="PRO_0000176218" description="Ribosomal RNA small subunit methyltransferase E">
    <location>
        <begin position="1"/>
        <end position="266"/>
    </location>
</feature>
<sequence length="266" mass="29379">MNIVLFEQEEVVHGCAVLSFRDSRFCHIKRVLKLSAGACFKAGIINGVKGSARISLATEKYLVAVFEKLEYEDCALFPLHLVIGFPRPIQLRRILRDVSSLGISSIHLVGTELGERSYLDSGLAHMEKMHTYLIRGLEQAGGTKLPLITVSESVRTFCSQHTHILGDSTHQKLILDTKNTLTDLGSAALRGDVLWIAIGSERGWTESERLLFSAMGFRAVDMGRRTLRTETAACAACAVVLANAHAWKRKIPRPGKRSSPISRKNP</sequence>
<name>RSME_TREPA</name>
<gene>
    <name type="primary">rsmE</name>
    <name type="ordered locus">TP_0032</name>
</gene>